<gene>
    <name type="primary">DYH1B</name>
</gene>
<name>DYHC2_TRIGR</name>
<dbReference type="EMBL" id="U03969">
    <property type="protein sequence ID" value="AAA63583.2"/>
    <property type="molecule type" value="mRNA"/>
</dbReference>
<dbReference type="PIR" id="T30297">
    <property type="entry name" value="T30297"/>
</dbReference>
<dbReference type="SMR" id="Q27802"/>
<dbReference type="GO" id="GO:0005858">
    <property type="term" value="C:axonemal dynein complex"/>
    <property type="evidence" value="ECO:0007669"/>
    <property type="project" value="TreeGrafter"/>
</dbReference>
<dbReference type="GO" id="GO:0005874">
    <property type="term" value="C:microtubule"/>
    <property type="evidence" value="ECO:0007669"/>
    <property type="project" value="UniProtKB-KW"/>
</dbReference>
<dbReference type="GO" id="GO:0005886">
    <property type="term" value="C:plasma membrane"/>
    <property type="evidence" value="ECO:0007669"/>
    <property type="project" value="UniProtKB-SubCell"/>
</dbReference>
<dbReference type="GO" id="GO:0005524">
    <property type="term" value="F:ATP binding"/>
    <property type="evidence" value="ECO:0007669"/>
    <property type="project" value="UniProtKB-KW"/>
</dbReference>
<dbReference type="GO" id="GO:0045505">
    <property type="term" value="F:dynein intermediate chain binding"/>
    <property type="evidence" value="ECO:0007669"/>
    <property type="project" value="InterPro"/>
</dbReference>
<dbReference type="GO" id="GO:0051959">
    <property type="term" value="F:dynein light intermediate chain binding"/>
    <property type="evidence" value="ECO:0007669"/>
    <property type="project" value="InterPro"/>
</dbReference>
<dbReference type="GO" id="GO:0008569">
    <property type="term" value="F:minus-end-directed microtubule motor activity"/>
    <property type="evidence" value="ECO:0007669"/>
    <property type="project" value="InterPro"/>
</dbReference>
<dbReference type="GO" id="GO:0030030">
    <property type="term" value="P:cell projection organization"/>
    <property type="evidence" value="ECO:0007669"/>
    <property type="project" value="UniProtKB-KW"/>
</dbReference>
<dbReference type="GO" id="GO:0007018">
    <property type="term" value="P:microtubule-based movement"/>
    <property type="evidence" value="ECO:0007669"/>
    <property type="project" value="InterPro"/>
</dbReference>
<dbReference type="FunFam" id="1.20.920.30:FF:000006">
    <property type="entry name" value="Cytoplasmic dynein 2 heavy chain 1"/>
    <property type="match status" value="1"/>
</dbReference>
<dbReference type="FunFam" id="3.40.50.300:FF:000706">
    <property type="entry name" value="Cytoplasmic dynein 2 heavy chain 1"/>
    <property type="match status" value="1"/>
</dbReference>
<dbReference type="FunFam" id="3.40.50.300:FF:000710">
    <property type="entry name" value="Cytoplasmic dynein 2 heavy chain 1"/>
    <property type="match status" value="1"/>
</dbReference>
<dbReference type="FunFam" id="3.40.50.300:FF:001810">
    <property type="entry name" value="Cytoplasmic dynein 2 heavy chain 1"/>
    <property type="match status" value="1"/>
</dbReference>
<dbReference type="FunFam" id="1.10.8.710:FF:000006">
    <property type="entry name" value="cytoplasmic dynein 2 heavy chain 1"/>
    <property type="match status" value="1"/>
</dbReference>
<dbReference type="FunFam" id="1.10.8.720:FF:000006">
    <property type="entry name" value="cytoplasmic dynein 2 heavy chain 1"/>
    <property type="match status" value="1"/>
</dbReference>
<dbReference type="FunFam" id="1.20.140.100:FF:000005">
    <property type="entry name" value="cytoplasmic dynein 2 heavy chain 1"/>
    <property type="match status" value="1"/>
</dbReference>
<dbReference type="FunFam" id="1.20.58.1120:FF:000006">
    <property type="entry name" value="cytoplasmic dynein 2 heavy chain 1"/>
    <property type="match status" value="1"/>
</dbReference>
<dbReference type="FunFam" id="3.20.180.20:FF:000002">
    <property type="entry name" value="Cytoplasmic dynein heavy chain 1"/>
    <property type="match status" value="1"/>
</dbReference>
<dbReference type="FunFam" id="3.40.50.300:FF:000071">
    <property type="entry name" value="Cytoplasmic dynein heavy chain 1"/>
    <property type="match status" value="1"/>
</dbReference>
<dbReference type="FunFam" id="1.20.920.20:FF:000040">
    <property type="entry name" value="Cytoplasmic dynein heavy chain, putative"/>
    <property type="match status" value="1"/>
</dbReference>
<dbReference type="FunFam" id="1.10.8.1220:FF:000003">
    <property type="entry name" value="Dynein cytoplasmic 2 heavy chain 1"/>
    <property type="match status" value="1"/>
</dbReference>
<dbReference type="FunFam" id="1.20.1270.280:FF:000006">
    <property type="entry name" value="Dynein cytoplasmic 2 heavy chain 1"/>
    <property type="match status" value="1"/>
</dbReference>
<dbReference type="FunFam" id="3.10.490.20:FF:000007">
    <property type="entry name" value="Dynein cytoplasmic 2 heavy chain 1"/>
    <property type="match status" value="1"/>
</dbReference>
<dbReference type="FunFam" id="3.40.50.300:FF:000598">
    <property type="entry name" value="Dynein cytoplasmic 2 heavy chain 1"/>
    <property type="match status" value="1"/>
</dbReference>
<dbReference type="Gene3D" id="1.10.8.1220">
    <property type="match status" value="1"/>
</dbReference>
<dbReference type="Gene3D" id="1.10.8.710">
    <property type="match status" value="1"/>
</dbReference>
<dbReference type="Gene3D" id="1.20.1270.280">
    <property type="match status" value="1"/>
</dbReference>
<dbReference type="Gene3D" id="1.20.58.1120">
    <property type="match status" value="1"/>
</dbReference>
<dbReference type="Gene3D" id="1.20.920.20">
    <property type="match status" value="1"/>
</dbReference>
<dbReference type="Gene3D" id="1.20.920.30">
    <property type="match status" value="1"/>
</dbReference>
<dbReference type="Gene3D" id="3.10.490.20">
    <property type="match status" value="1"/>
</dbReference>
<dbReference type="Gene3D" id="6.10.140.1060">
    <property type="match status" value="1"/>
</dbReference>
<dbReference type="Gene3D" id="1.20.140.100">
    <property type="entry name" value="Dynein heavy chain, N-terminal domain 2"/>
    <property type="match status" value="1"/>
</dbReference>
<dbReference type="Gene3D" id="3.20.180.20">
    <property type="entry name" value="Dynein heavy chain, N-terminal domain 2"/>
    <property type="match status" value="1"/>
</dbReference>
<dbReference type="Gene3D" id="3.40.50.300">
    <property type="entry name" value="P-loop containing nucleotide triphosphate hydrolases"/>
    <property type="match status" value="5"/>
</dbReference>
<dbReference type="Gene3D" id="1.10.8.720">
    <property type="entry name" value="Region D6 of dynein motor"/>
    <property type="match status" value="1"/>
</dbReference>
<dbReference type="InterPro" id="IPR035699">
    <property type="entry name" value="AAA_6"/>
</dbReference>
<dbReference type="InterPro" id="IPR035706">
    <property type="entry name" value="AAA_9"/>
</dbReference>
<dbReference type="InterPro" id="IPR041658">
    <property type="entry name" value="AAA_lid_11"/>
</dbReference>
<dbReference type="InterPro" id="IPR042219">
    <property type="entry name" value="AAA_lid_11_sf"/>
</dbReference>
<dbReference type="InterPro" id="IPR026983">
    <property type="entry name" value="DHC"/>
</dbReference>
<dbReference type="InterPro" id="IPR054354">
    <property type="entry name" value="DYNC2H1-like_lid"/>
</dbReference>
<dbReference type="InterPro" id="IPR049400">
    <property type="entry name" value="DYNC2H1_AAA_dom"/>
</dbReference>
<dbReference type="InterPro" id="IPR042222">
    <property type="entry name" value="Dynein_2_N"/>
</dbReference>
<dbReference type="InterPro" id="IPR043157">
    <property type="entry name" value="Dynein_AAA1S"/>
</dbReference>
<dbReference type="InterPro" id="IPR041228">
    <property type="entry name" value="Dynein_C"/>
</dbReference>
<dbReference type="InterPro" id="IPR043160">
    <property type="entry name" value="Dynein_C_barrel"/>
</dbReference>
<dbReference type="InterPro" id="IPR024743">
    <property type="entry name" value="Dynein_HC_stalk"/>
</dbReference>
<dbReference type="InterPro" id="IPR024317">
    <property type="entry name" value="Dynein_heavy_chain_D4_dom"/>
</dbReference>
<dbReference type="InterPro" id="IPR004273">
    <property type="entry name" value="Dynein_heavy_D6_P-loop"/>
</dbReference>
<dbReference type="InterPro" id="IPR013602">
    <property type="entry name" value="Dynein_heavy_linker"/>
</dbReference>
<dbReference type="InterPro" id="IPR013594">
    <property type="entry name" value="Dynein_heavy_tail"/>
</dbReference>
<dbReference type="InterPro" id="IPR042228">
    <property type="entry name" value="Dynein_linker_3"/>
</dbReference>
<dbReference type="InterPro" id="IPR027417">
    <property type="entry name" value="P-loop_NTPase"/>
</dbReference>
<dbReference type="PANTHER" id="PTHR46532:SF15">
    <property type="entry name" value="CYTOPLASMIC DYNEIN 2 HEAVY CHAIN 1"/>
    <property type="match status" value="1"/>
</dbReference>
<dbReference type="PANTHER" id="PTHR46532">
    <property type="entry name" value="MALE FERTILITY FACTOR KL5"/>
    <property type="match status" value="1"/>
</dbReference>
<dbReference type="Pfam" id="PF12774">
    <property type="entry name" value="AAA_6"/>
    <property type="match status" value="1"/>
</dbReference>
<dbReference type="Pfam" id="PF12775">
    <property type="entry name" value="AAA_7"/>
    <property type="match status" value="1"/>
</dbReference>
<dbReference type="Pfam" id="PF12780">
    <property type="entry name" value="AAA_8"/>
    <property type="match status" value="1"/>
</dbReference>
<dbReference type="Pfam" id="PF12781">
    <property type="entry name" value="AAA_9"/>
    <property type="match status" value="1"/>
</dbReference>
<dbReference type="Pfam" id="PF18198">
    <property type="entry name" value="AAA_lid_11"/>
    <property type="match status" value="1"/>
</dbReference>
<dbReference type="Pfam" id="PF08385">
    <property type="entry name" value="DHC_N1"/>
    <property type="match status" value="1"/>
</dbReference>
<dbReference type="Pfam" id="PF08393">
    <property type="entry name" value="DHC_N2"/>
    <property type="match status" value="1"/>
</dbReference>
<dbReference type="Pfam" id="PF22597">
    <property type="entry name" value="DYN_lid"/>
    <property type="match status" value="1"/>
</dbReference>
<dbReference type="Pfam" id="PF21264">
    <property type="entry name" value="DYNC2H1_AAA_dom"/>
    <property type="match status" value="1"/>
</dbReference>
<dbReference type="Pfam" id="PF18199">
    <property type="entry name" value="Dynein_C"/>
    <property type="match status" value="1"/>
</dbReference>
<dbReference type="Pfam" id="PF03028">
    <property type="entry name" value="Dynein_heavy"/>
    <property type="match status" value="1"/>
</dbReference>
<dbReference type="Pfam" id="PF12777">
    <property type="entry name" value="MT"/>
    <property type="match status" value="1"/>
</dbReference>
<dbReference type="SUPFAM" id="SSF52540">
    <property type="entry name" value="P-loop containing nucleoside triphosphate hydrolases"/>
    <property type="match status" value="4"/>
</dbReference>
<feature type="chain" id="PRO_0000318746" description="Cytoplasmic dynein 2 heavy chain 1">
    <location>
        <begin position="1"/>
        <end position="4318"/>
    </location>
</feature>
<feature type="region of interest" description="Stem" evidence="1">
    <location>
        <begin position="1"/>
        <end position="1658"/>
    </location>
</feature>
<feature type="region of interest" description="AAA 1" evidence="1">
    <location>
        <begin position="1659"/>
        <end position="1883"/>
    </location>
</feature>
<feature type="region of interest" description="AAA 2" evidence="1">
    <location>
        <begin position="1951"/>
        <end position="2171"/>
    </location>
</feature>
<feature type="region of interest" description="AAA 3" evidence="1">
    <location>
        <begin position="2261"/>
        <end position="2515"/>
    </location>
</feature>
<feature type="region of interest" description="AAA 4" evidence="1">
    <location>
        <begin position="2623"/>
        <end position="2871"/>
    </location>
</feature>
<feature type="region of interest" description="Stalk" evidence="1">
    <location>
        <begin position="2888"/>
        <end position="3176"/>
    </location>
</feature>
<feature type="region of interest" description="AAA 5" evidence="1">
    <location>
        <begin position="3251"/>
        <end position="3487"/>
    </location>
</feature>
<feature type="region of interest" description="AAA 6" evidence="1">
    <location>
        <begin position="3699"/>
        <end position="3914"/>
    </location>
</feature>
<feature type="coiled-coil region" evidence="2">
    <location>
        <begin position="1328"/>
        <end position="1354"/>
    </location>
</feature>
<feature type="coiled-coil region" evidence="2">
    <location>
        <begin position="1402"/>
        <end position="1431"/>
    </location>
</feature>
<feature type="coiled-coil region" evidence="2">
    <location>
        <begin position="1959"/>
        <end position="1986"/>
    </location>
</feature>
<feature type="coiled-coil region" evidence="2">
    <location>
        <begin position="2908"/>
        <end position="2989"/>
    </location>
</feature>
<feature type="coiled-coil region" evidence="2">
    <location>
        <begin position="3423"/>
        <end position="3480"/>
    </location>
</feature>
<feature type="binding site" evidence="2">
    <location>
        <begin position="147"/>
        <end position="154"/>
    </location>
    <ligand>
        <name>ATP</name>
        <dbReference type="ChEBI" id="CHEBI:30616"/>
    </ligand>
</feature>
<feature type="binding site" evidence="2">
    <location>
        <begin position="1697"/>
        <end position="1704"/>
    </location>
    <ligand>
        <name>ATP</name>
        <dbReference type="ChEBI" id="CHEBI:30616"/>
    </ligand>
</feature>
<feature type="binding site" evidence="2">
    <location>
        <begin position="1989"/>
        <end position="1996"/>
    </location>
    <ligand>
        <name>ATP</name>
        <dbReference type="ChEBI" id="CHEBI:30616"/>
    </ligand>
</feature>
<feature type="binding site" evidence="2">
    <location>
        <begin position="2301"/>
        <end position="2308"/>
    </location>
    <ligand>
        <name>ATP</name>
        <dbReference type="ChEBI" id="CHEBI:30616"/>
    </ligand>
</feature>
<feature type="binding site" evidence="2">
    <location>
        <begin position="2661"/>
        <end position="2668"/>
    </location>
    <ligand>
        <name>ATP</name>
        <dbReference type="ChEBI" id="CHEBI:30616"/>
    </ligand>
</feature>
<proteinExistence type="evidence at transcript level"/>
<reference key="1">
    <citation type="journal article" date="1994" name="Mol. Biol. Cell">
        <title>Phylogeny and expression of axonemal and cytoplasmic dynein genes in sea urchins.</title>
        <authorList>
            <person name="Gibbons B.H."/>
            <person name="Asai D.J."/>
            <person name="Tang W.-J.Y."/>
            <person name="Hays T.S."/>
            <person name="Gibbons I.R."/>
        </authorList>
    </citation>
    <scope>NUCLEOTIDE SEQUENCE [MRNA]</scope>
    <source>
        <tissue>Embryo</tissue>
    </source>
</reference>
<organism>
    <name type="scientific">Tripneustes gratilla</name>
    <name type="common">Hawaian sea urchin</name>
    <name type="synonym">Echinus gratilla</name>
    <dbReference type="NCBI Taxonomy" id="7673"/>
    <lineage>
        <taxon>Eukaryota</taxon>
        <taxon>Metazoa</taxon>
        <taxon>Echinodermata</taxon>
        <taxon>Eleutherozoa</taxon>
        <taxon>Echinozoa</taxon>
        <taxon>Echinoidea</taxon>
        <taxon>Euechinoidea</taxon>
        <taxon>Echinacea</taxon>
        <taxon>Temnopleuroida</taxon>
        <taxon>Toxopneustidae</taxon>
        <taxon>Tripneustes</taxon>
    </lineage>
</organism>
<accession>Q27802</accession>
<sequence>MPAEDARKEYLLSSCGSQLGLSASDDAITSLYSARELNTFLDDGNCSVLSAKLNSSGGNKKVYLSNKVDPSDTGEKVIAFFKLRPDVISPDNVQSSILTVSMMDSPAGALLHAVDKVFAPLLIEDEKYNRSFNPKLQSLLSELRAGLKSLVRKQDPSQGGPVKRGDNDFAGILTPSDEFQHWSEVAMSGRNQDAKERAEHFLSFFETVSREFDVLDTLSLEEAQELVETTQDAVDDVWKQGEFDPYPEKRMAHLLEVIGSAFGRFIQRKLGEFDLWLDPFHKVKQALLSGIAICEKWVSSCEKLTEQFWKRDPMHPWNGAKFTPEGLSQLSKRLQEISTLRTIHEQLIRLLSKGEQEEVRLKDVFSAFSGLNPLQYNPYTEPHWRAAVSQYERAINPAERRIAIKLRSQFRNVEGNPNQLLREFQKYKELVSRESVRKEVVSERETLLGQLQVYLKSIRDDFNVRTSESSPPTGKNLPEVVNNIVWVRQLEAKVEQTSQVADTLLNDLSGFGRFRRDAGDLLDELRNWRQDQFDSWSSEMQAAISDPNKPLSLQMTGRLMEFETKNNELIVSYSERLVTLMREVRQLQALGYPVAAKIQHTAAIAQKFYKHGVILKQVAHFHNSIAEQMIPSQRNMMLQSALAFERIIKNPRTGSKDAGQGKVQVTWENPKELEEYITKLQAAAEKLTTENRRLRKWHYTVCDKVVSLMSIDLLRQQPRWKEGLQEIRGIMASLESQGYKSQDMKSWKMHWDRQLYKALEHQYQMGLEALNENLPEIKVELTYRQQALQFRPPIEEIRAKYYREMKKFISLPYHFRGIGDTGEPLIYPAIIERNASGFLNVYKMAEVLFSKLEKAKDIFKNWVVLGSVDLDKLLETHLHTVTDWERNFKALKARGRDSEKLPSQVKVYCVTVSTAPVKGTIDDHIQRLFDSLLSSLRRSITESVTEIEKFLKDGMEALATMPQTVEEIGNANAKHAELEAKKPEMRPMFDRAEAKNKLLRTVAGGGVDQFTQLHAHWEKFELMMESHQLMIKEQVNVMKSNVESRVDAFRAELEKFSARWNHAKPSPEVIESGDKESCLRAVELVKEKKVEFDEMQKTKNSLIFDCKHFELEEPFFSIANDLEVDFDQQTTMWTLYEEFSNGLSVLETEDWIVFRSKTYQFDDFLTTWTEKLKSGGPDVEHTIMTVRLSKDIDKYKTVSPLLKYLSSDIFTQEHWMDLYRMLKMPRSKTVERMTFGDILATADHIVANADGLKDLFNRAKGEVSIREALRELDVWGVGACFSLTEYSDSTDHQLMLIKDWKDLVTQVGDNQSLLQSLKDSPYYKGFADKATIWEQRLADLDEYLQNLNQIQRKWVYLEPIFGRGALPKEQGRFRRVDDDFRSIMMDVARDNRVLSLVGRSGLRTTLTTLLDQLQRCQKALNEFLEEKRSILPRFYFIGDDDLLEILGQSQNPAVIQSHLKKLFAGIHSVEFDQGCKHITAMKSLEGEVVPLLKAVEITPEVEIWLGDLAKEMKSTLRKLLVDCLKDQQSSSSGVGVDPTKYPSQILGLAAQIQFTEQCETAIRDNSLQDLLIELEQQLEGYTSADISGAAGERNAAIHVLELKLKALILDTIHSLDVVQLLQKENVTSLDNWLWQKQLRYYLDNTKTAIMRMVDAEFQYTYEYQGNAAKLVHTPLTDKCYLTLTQGMHMGMGGNPYGPAGTGKTESVKALGGLFGRQVLVFNCDEGVDVKSMGRIFIGLVKCGAWGCFDEFNRLEEAVLSAVSMQIQTIQAALKQKKPKVDLLDRTIDIDPNSGIFITLNPAGKGYGGRQKLPDNLKHVFRPVAMSRPDNEQIAEVILFSEGFKDGKSLGRKLVAIFNLAKELLTPQQHYDWGLRALKTVLRGCGNLLQIARQQAGQDRSKVQEPKLVVQALRVNTLSKLTFSDGIRFDALVKDVFPGVELKDIEYMTLADAIRQHCKEHNLVVMETQVKKALELYEQLRQRMGVVVVGPSGSGKSTTWQILRAALNNTGQVVKQYTMNPKAMPRTQLLGHIDMDTREWSDGVLTYSARQVVREPQEIHSWIICDGDIDPEWIESLNSVLDDNRLLTMPSGERIQFGPNVNFLFETHDLSCASPATISRMGMIFMSDEDTEIKDLVQSWLSHQAEESRNRLAAWIEDHFYRALEWVMRQGDFVVDTSLVGVVMNGLSHLRGAECISDFTIKLIRGLGANLPEATRMNFAKEVFHMTREQPPDPRRILDTYFDERTGSLATYTMQDNDELSASDFNNPSSLPVIRTPDVQRCLDFFNPWLEADNRQPFILVGPDGCGKGMVLRHCFAQLRSTQIATIHCNAQTSPTHLLQKLQQMCMVLSTNTGRVYRPKDCENLVLYLKDLNLPKPDKWGTCQLLAFLQQVLTYHGFYDDKLEWVGLDGVQIVASMNAAHTVGRHPLSTRFTSIVRICSIGYADREQLQGIYSAYLRPVLHRSLGNHPVWSSPSKVSMLAGSMISIYEQVRSKFTIDDHSHYLFTPRDLTQWVLGLLRYDLGGSSESTSEHVLEVLSYEARRLFCDRLVGEEARNRFDNILNGTLQADWNAGQILQNLNGHYYVTWGARTETSSGGSLPPAGKSLGRLSASDLKEVIKKAKKTFARENRELDIQIFHEVLDHVARVDRVLTQPRGSLLLAGRSGVGRRTAASLVAHCHRTELFSPNLSRAYGLKQFKNDLKTAMQQAGVEGNQVVLLLEDHQFIQPQFLELINSLLSSGEIPGLYSPEELEPLLAPIRDQASEEGFRGTLISYYASRILTNLHVVLIMDSKNASFAVNCQSNPAFYKSCSVQWMEGWSKESMKEIPRLLLRHHKGDTKDEGSKEDRKRHRKVSGGDEIIRNFLEIHKSSSVRHSTPRRYMTFLHTYLDVYRRKKQGVEEKQKHLQAGVAKLNEAKALVAELNSKAAKQSALLAEKQKEADEALKKIQTSMEKAGEQRREIEILKQQADEENVKLEKRKRVIDEELAEIEPQVQAAKSAVGSIKSESLSEIRAMRAPPDVIRDILEGVLRLMGIFDTSWVSMKSFLAKRGVKEEISTFDARKINKDLREGTEQLLKKHASSFDPQNAKRASVAAAPLAAWVKANVKYSYALEKIEPLETEQNQLKKNLEKAVGRIEKLSKGLADVDHRVDEYKRRFQKLNEEAAKLKYELEKEQETIASAENLIGKLEGEYQRWNNQVSELNTELETLPKKAQCAAGFITYLTSSPEDERKQKLAEWSKLCGLERFDMRRFLSTESEQLTWKGEGLPSDELSVENAVMILQTNDMSIKSSLRPFLIDPSLRATEWLKTHLKEARLEVINQQDANFSTALELAVRFGKTLIIQEMDKIEPVLYPLLRADLISQGPRFVVQIGDKVIDYHEDFRLFMTTRNPNPEIPPDAASIISEINFTTTRAGLTGQLLAATIQHEKPELEVRKTELLKQEEDLKIQLAQLEESLLETLAKAEGNILENKALLESLNKTKESSQTITQSLVESVQLQESLDQERAAYLPLAENGSALFFVISDLAKLNNMYRFSLGAFLRLFSKALQGRMDGSSTEMRIQKLIKSLQMLVYEYVCQSLFKADRLMFALHLVHGMHPNHFKENEWEAFLGQIVADVRDSQQSGSMPSWVDQDRHKALASFMATFPSVGQSLSLTDNGLWGHFNRSSQCEHEFPTSLEKKISPFQQLLLIQAIRPDRLQSAMTFFAQRGLGMKELTTPTINLKRLCQDTVPSEPILIIISPGADPTQELQEVAAEVIGADHYHEVAMGQGQADIAMQLLHECSRNGEWLCLKNLHLVTAWLPVLEKEMNALSPHENFRLWLTAESHPKFPTILLQSSLKITYEAPPGIKKNLLRSYDSWTPEFIGRENNVVRAQALFALAWFHAICQERRNFIPQGWTKFYEFSMSDLRAGADIIDRLCHGKGKEVQFEFIYGLFENAIYGGRVDNPFDMRVLRSYLAQYFNKEMLGGSSARRSKKLPGGNSIPVSSYYKDFTELVSKFPDDDKPSFFGLPANIERSSQRIISVQVISQLKILRRSDEAAEKFDTEKWNTELGPILSLWKKLNQGSNLIQTKAQPPSDRSGTQGPIDSFIQLERYNALQLVQFVHSTLAALSKVIRGTSLLTSEVQALASNLLKQETPLSWQSKWEGPEDPVLYLKTIVSRTMAIQGWVEKAQRNNLLSDTLNLSELFHPDTFLNALRQQTARDSKTSMDSLKFACRWSGNISGAKYQVKIGGLHLEGCTFDGQRLSENQRDSPSVCSVPACSVAWVLKDTPNTYHASESISLPVYFTEQREKIVTHLVLPCGGEQDHWIQTGAALFLQNQ</sequence>
<comment type="function">
    <text evidence="1">May function as a motor for intraflagellar retrograde transport. Functions in cilia biogenesis (By similarity).</text>
</comment>
<comment type="subunit">
    <text evidence="1">The cytoplasmic dynein complex 2 is probably composed by a heavy chain DYH1B homodimer and a number of light intermediate chains.</text>
</comment>
<comment type="subcellular location">
    <subcellularLocation>
        <location evidence="1">Cytoplasm</location>
        <location evidence="1">Cytoskeleton</location>
        <location evidence="1">Cilium axoneme</location>
    </subcellularLocation>
    <subcellularLocation>
        <location evidence="1">Cell membrane</location>
        <topology evidence="1">Peripheral membrane protein</topology>
    </subcellularLocation>
    <subcellularLocation>
        <location evidence="1">Cytoplasm</location>
    </subcellularLocation>
</comment>
<comment type="similarity">
    <text evidence="3">Belongs to the dynein heavy chain family.</text>
</comment>
<protein>
    <recommendedName>
        <fullName>Cytoplasmic dynein 2 heavy chain 1</fullName>
    </recommendedName>
    <alternativeName>
        <fullName>Dynein heavy chain isotype 1B</fullName>
    </alternativeName>
</protein>
<keyword id="KW-0067">ATP-binding</keyword>
<keyword id="KW-1003">Cell membrane</keyword>
<keyword id="KW-0966">Cell projection</keyword>
<keyword id="KW-0969">Cilium</keyword>
<keyword id="KW-0970">Cilium biogenesis/degradation</keyword>
<keyword id="KW-0175">Coiled coil</keyword>
<keyword id="KW-0963">Cytoplasm</keyword>
<keyword id="KW-0206">Cytoskeleton</keyword>
<keyword id="KW-0217">Developmental protein</keyword>
<keyword id="KW-0243">Dynein</keyword>
<keyword id="KW-0472">Membrane</keyword>
<keyword id="KW-0493">Microtubule</keyword>
<keyword id="KW-0505">Motor protein</keyword>
<keyword id="KW-0547">Nucleotide-binding</keyword>
<evidence type="ECO:0000250" key="1"/>
<evidence type="ECO:0000255" key="2"/>
<evidence type="ECO:0000305" key="3"/>